<gene>
    <name evidence="1" type="primary">psd</name>
    <name type="ordered locus">lpl2903</name>
</gene>
<sequence length="283" mass="31960">MFRDVLKTLPQYLIPKHGITALAGYFADVKNPRLKNFLIRNFIRKFDVDMSEALIEDPKSYDCFNDFFIRHLKPECRPLSQSDVICPVDGCISEIGKIERGQLLQAKGKYYSVQELLACDGQLAEQFVQGQFATLYLSPKDYHRVHMPIDAELVSMTYIPGALFSVQPATTRVVPKLFARNERLAIFFKTKIGPMVMVMVGATIVGAIGTSWHGDVKRSKKLERFDYSEQFSDKIISQGSEMGYFKLGSTVVLLFANGEKIQWDKELLAGSKIQLGKPMAIIT</sequence>
<dbReference type="EC" id="4.1.1.65" evidence="1"/>
<dbReference type="EMBL" id="CR628337">
    <property type="protein sequence ID" value="CAH17147.1"/>
    <property type="molecule type" value="Genomic_DNA"/>
</dbReference>
<dbReference type="SMR" id="Q5WSH5"/>
<dbReference type="KEGG" id="lpf:lpl2903"/>
<dbReference type="LegioList" id="lpl2903"/>
<dbReference type="HOGENOM" id="CLU_029061_4_1_6"/>
<dbReference type="UniPathway" id="UPA00558">
    <property type="reaction ID" value="UER00616"/>
</dbReference>
<dbReference type="Proteomes" id="UP000002517">
    <property type="component" value="Chromosome"/>
</dbReference>
<dbReference type="GO" id="GO:0005886">
    <property type="term" value="C:plasma membrane"/>
    <property type="evidence" value="ECO:0007669"/>
    <property type="project" value="UniProtKB-SubCell"/>
</dbReference>
<dbReference type="GO" id="GO:0004609">
    <property type="term" value="F:phosphatidylserine decarboxylase activity"/>
    <property type="evidence" value="ECO:0007669"/>
    <property type="project" value="UniProtKB-UniRule"/>
</dbReference>
<dbReference type="GO" id="GO:0006646">
    <property type="term" value="P:phosphatidylethanolamine biosynthetic process"/>
    <property type="evidence" value="ECO:0007669"/>
    <property type="project" value="UniProtKB-UniRule"/>
</dbReference>
<dbReference type="HAMAP" id="MF_00662">
    <property type="entry name" value="PS_decarb_PSD_B_type1"/>
    <property type="match status" value="1"/>
</dbReference>
<dbReference type="InterPro" id="IPR003817">
    <property type="entry name" value="PS_Dcarbxylase"/>
</dbReference>
<dbReference type="InterPro" id="IPR033177">
    <property type="entry name" value="PSD-B"/>
</dbReference>
<dbReference type="InterPro" id="IPR033178">
    <property type="entry name" value="PSD_type1_pro"/>
</dbReference>
<dbReference type="NCBIfam" id="TIGR00163">
    <property type="entry name" value="PS_decarb"/>
    <property type="match status" value="1"/>
</dbReference>
<dbReference type="PANTHER" id="PTHR10067">
    <property type="entry name" value="PHOSPHATIDYLSERINE DECARBOXYLASE"/>
    <property type="match status" value="1"/>
</dbReference>
<dbReference type="PANTHER" id="PTHR10067:SF6">
    <property type="entry name" value="PHOSPHATIDYLSERINE DECARBOXYLASE PROENZYME, MITOCHONDRIAL"/>
    <property type="match status" value="1"/>
</dbReference>
<dbReference type="Pfam" id="PF02666">
    <property type="entry name" value="PS_Dcarbxylase"/>
    <property type="match status" value="1"/>
</dbReference>
<accession>Q5WSH5</accession>
<name>PSD_LEGPL</name>
<protein>
    <recommendedName>
        <fullName evidence="1">Phosphatidylserine decarboxylase proenzyme</fullName>
        <ecNumber evidence="1">4.1.1.65</ecNumber>
    </recommendedName>
    <component>
        <recommendedName>
            <fullName evidence="1">Phosphatidylserine decarboxylase alpha chain</fullName>
        </recommendedName>
    </component>
    <component>
        <recommendedName>
            <fullName evidence="1">Phosphatidylserine decarboxylase beta chain</fullName>
        </recommendedName>
    </component>
</protein>
<proteinExistence type="inferred from homology"/>
<keyword id="KW-1003">Cell membrane</keyword>
<keyword id="KW-0210">Decarboxylase</keyword>
<keyword id="KW-0444">Lipid biosynthesis</keyword>
<keyword id="KW-0443">Lipid metabolism</keyword>
<keyword id="KW-0456">Lyase</keyword>
<keyword id="KW-0472">Membrane</keyword>
<keyword id="KW-0594">Phospholipid biosynthesis</keyword>
<keyword id="KW-1208">Phospholipid metabolism</keyword>
<keyword id="KW-0670">Pyruvate</keyword>
<keyword id="KW-0865">Zymogen</keyword>
<comment type="function">
    <text evidence="1">Catalyzes the formation of phosphatidylethanolamine (PtdEtn) from phosphatidylserine (PtdSer).</text>
</comment>
<comment type="catalytic activity">
    <reaction evidence="1">
        <text>a 1,2-diacyl-sn-glycero-3-phospho-L-serine + H(+) = a 1,2-diacyl-sn-glycero-3-phosphoethanolamine + CO2</text>
        <dbReference type="Rhea" id="RHEA:20828"/>
        <dbReference type="ChEBI" id="CHEBI:15378"/>
        <dbReference type="ChEBI" id="CHEBI:16526"/>
        <dbReference type="ChEBI" id="CHEBI:57262"/>
        <dbReference type="ChEBI" id="CHEBI:64612"/>
        <dbReference type="EC" id="4.1.1.65"/>
    </reaction>
</comment>
<comment type="cofactor">
    <cofactor evidence="1">
        <name>pyruvate</name>
        <dbReference type="ChEBI" id="CHEBI:15361"/>
    </cofactor>
    <text evidence="1">Binds 1 pyruvoyl group covalently per subunit.</text>
</comment>
<comment type="pathway">
    <text evidence="1">Phospholipid metabolism; phosphatidylethanolamine biosynthesis; phosphatidylethanolamine from CDP-diacylglycerol: step 2/2.</text>
</comment>
<comment type="subunit">
    <text evidence="1">Heterodimer of a large membrane-associated beta subunit and a small pyruvoyl-containing alpha subunit.</text>
</comment>
<comment type="subcellular location">
    <subcellularLocation>
        <location evidence="1">Cell membrane</location>
        <topology evidence="1">Peripheral membrane protein</topology>
    </subcellularLocation>
</comment>
<comment type="PTM">
    <text evidence="1">Is synthesized initially as an inactive proenzyme. Formation of the active enzyme involves a self-maturation process in which the active site pyruvoyl group is generated from an internal serine residue via an autocatalytic post-translational modification. Two non-identical subunits are generated from the proenzyme in this reaction, and the pyruvate is formed at the N-terminus of the alpha chain, which is derived from the carboxyl end of the proenzyme. The autoendoproteolytic cleavage occurs by a canonical serine protease mechanism, in which the side chain hydroxyl group of the serine supplies its oxygen atom to form the C-terminus of the beta chain, while the remainder of the serine residue undergoes an oxidative deamination to produce ammonia and the pyruvoyl prosthetic group on the alpha chain. During this reaction, the Ser that is part of the protease active site of the proenzyme becomes the pyruvoyl prosthetic group, which constitutes an essential element of the active site of the mature decarboxylase.</text>
</comment>
<comment type="similarity">
    <text evidence="1">Belongs to the phosphatidylserine decarboxylase family. PSD-B subfamily. Prokaryotic type I sub-subfamily.</text>
</comment>
<evidence type="ECO:0000255" key="1">
    <source>
        <dbReference type="HAMAP-Rule" id="MF_00662"/>
    </source>
</evidence>
<reference key="1">
    <citation type="journal article" date="2004" name="Nat. Genet.">
        <title>Evidence in the Legionella pneumophila genome for exploitation of host cell functions and high genome plasticity.</title>
        <authorList>
            <person name="Cazalet C."/>
            <person name="Rusniok C."/>
            <person name="Brueggemann H."/>
            <person name="Zidane N."/>
            <person name="Magnier A."/>
            <person name="Ma L."/>
            <person name="Tichit M."/>
            <person name="Jarraud S."/>
            <person name="Bouchier C."/>
            <person name="Vandenesch F."/>
            <person name="Kunst F."/>
            <person name="Etienne J."/>
            <person name="Glaser P."/>
            <person name="Buchrieser C."/>
        </authorList>
    </citation>
    <scope>NUCLEOTIDE SEQUENCE [LARGE SCALE GENOMIC DNA]</scope>
    <source>
        <strain>Lens</strain>
    </source>
</reference>
<organism>
    <name type="scientific">Legionella pneumophila (strain Lens)</name>
    <dbReference type="NCBI Taxonomy" id="297245"/>
    <lineage>
        <taxon>Bacteria</taxon>
        <taxon>Pseudomonadati</taxon>
        <taxon>Pseudomonadota</taxon>
        <taxon>Gammaproteobacteria</taxon>
        <taxon>Legionellales</taxon>
        <taxon>Legionellaceae</taxon>
        <taxon>Legionella</taxon>
    </lineage>
</organism>
<feature type="chain" id="PRO_0000029675" description="Phosphatidylserine decarboxylase beta chain" evidence="1">
    <location>
        <begin position="1"/>
        <end position="248"/>
    </location>
</feature>
<feature type="chain" id="PRO_0000029676" description="Phosphatidylserine decarboxylase alpha chain" evidence="1">
    <location>
        <begin position="249"/>
        <end position="283"/>
    </location>
</feature>
<feature type="active site" description="Charge relay system; for autoendoproteolytic cleavage activity" evidence="1">
    <location>
        <position position="89"/>
    </location>
</feature>
<feature type="active site" description="Charge relay system; for autoendoproteolytic cleavage activity" evidence="1">
    <location>
        <position position="146"/>
    </location>
</feature>
<feature type="active site" description="Charge relay system; for autoendoproteolytic cleavage activity" evidence="1">
    <location>
        <position position="249"/>
    </location>
</feature>
<feature type="active site" description="Schiff-base intermediate with substrate; via pyruvic acid; for decarboxylase activity" evidence="1">
    <location>
        <position position="249"/>
    </location>
</feature>
<feature type="site" description="Cleavage (non-hydrolytic); by autocatalysis" evidence="1">
    <location>
        <begin position="248"/>
        <end position="249"/>
    </location>
</feature>
<feature type="modified residue" description="Pyruvic acid (Ser); by autocatalysis" evidence="1">
    <location>
        <position position="249"/>
    </location>
</feature>